<evidence type="ECO:0000255" key="1">
    <source>
        <dbReference type="HAMAP-Rule" id="MF_00836"/>
    </source>
</evidence>
<proteinExistence type="inferred from homology"/>
<feature type="chain" id="PRO_0000412772" description="Ribose 1,5-bisphosphate phosphokinase PhnN">
    <location>
        <begin position="1"/>
        <end position="183"/>
    </location>
</feature>
<dbReference type="EC" id="2.7.4.23" evidence="1"/>
<dbReference type="EMBL" id="CP001157">
    <property type="protein sequence ID" value="ACO77028.1"/>
    <property type="molecule type" value="Genomic_DNA"/>
</dbReference>
<dbReference type="RefSeq" id="WP_012699453.1">
    <property type="nucleotide sequence ID" value="NC_012560.1"/>
</dbReference>
<dbReference type="SMR" id="C1DLT0"/>
<dbReference type="STRING" id="322710.Avin_07830"/>
<dbReference type="EnsemblBacteria" id="ACO77028">
    <property type="protein sequence ID" value="ACO77028"/>
    <property type="gene ID" value="Avin_07830"/>
</dbReference>
<dbReference type="GeneID" id="88184177"/>
<dbReference type="KEGG" id="avn:Avin_07830"/>
<dbReference type="eggNOG" id="COG3709">
    <property type="taxonomic scope" value="Bacteria"/>
</dbReference>
<dbReference type="HOGENOM" id="CLU_102477_0_0_6"/>
<dbReference type="OrthoDB" id="341217at2"/>
<dbReference type="UniPathway" id="UPA00087">
    <property type="reaction ID" value="UER00175"/>
</dbReference>
<dbReference type="Proteomes" id="UP000002424">
    <property type="component" value="Chromosome"/>
</dbReference>
<dbReference type="GO" id="GO:0005829">
    <property type="term" value="C:cytosol"/>
    <property type="evidence" value="ECO:0007669"/>
    <property type="project" value="TreeGrafter"/>
</dbReference>
<dbReference type="GO" id="GO:0005524">
    <property type="term" value="F:ATP binding"/>
    <property type="evidence" value="ECO:0007669"/>
    <property type="project" value="UniProtKB-KW"/>
</dbReference>
<dbReference type="GO" id="GO:0033863">
    <property type="term" value="F:ribose 1,5-bisphosphate phosphokinase activity"/>
    <property type="evidence" value="ECO:0007669"/>
    <property type="project" value="UniProtKB-UniRule"/>
</dbReference>
<dbReference type="GO" id="GO:0006015">
    <property type="term" value="P:5-phosphoribose 1-diphosphate biosynthetic process"/>
    <property type="evidence" value="ECO:0007669"/>
    <property type="project" value="UniProtKB-UniRule"/>
</dbReference>
<dbReference type="GO" id="GO:0019634">
    <property type="term" value="P:organic phosphonate metabolic process"/>
    <property type="evidence" value="ECO:0007669"/>
    <property type="project" value="UniProtKB-UniRule"/>
</dbReference>
<dbReference type="Gene3D" id="3.40.50.300">
    <property type="entry name" value="P-loop containing nucleotide triphosphate hydrolases"/>
    <property type="match status" value="1"/>
</dbReference>
<dbReference type="HAMAP" id="MF_00836">
    <property type="entry name" value="PhnN"/>
    <property type="match status" value="1"/>
</dbReference>
<dbReference type="InterPro" id="IPR008145">
    <property type="entry name" value="GK/Ca_channel_bsu"/>
</dbReference>
<dbReference type="InterPro" id="IPR027417">
    <property type="entry name" value="P-loop_NTPase"/>
</dbReference>
<dbReference type="InterPro" id="IPR012699">
    <property type="entry name" value="PhnN"/>
</dbReference>
<dbReference type="NCBIfam" id="TIGR02322">
    <property type="entry name" value="phosphon_PhnN"/>
    <property type="match status" value="1"/>
</dbReference>
<dbReference type="NCBIfam" id="NF007485">
    <property type="entry name" value="PRK10078.1"/>
    <property type="match status" value="1"/>
</dbReference>
<dbReference type="PANTHER" id="PTHR23117">
    <property type="entry name" value="GUANYLATE KINASE-RELATED"/>
    <property type="match status" value="1"/>
</dbReference>
<dbReference type="PANTHER" id="PTHR23117:SF8">
    <property type="entry name" value="RIBOSE 1,5-BISPHOSPHATE PHOSPHOKINASE PHNN"/>
    <property type="match status" value="1"/>
</dbReference>
<dbReference type="Pfam" id="PF13238">
    <property type="entry name" value="AAA_18"/>
    <property type="match status" value="1"/>
</dbReference>
<dbReference type="SMART" id="SM00072">
    <property type="entry name" value="GuKc"/>
    <property type="match status" value="1"/>
</dbReference>
<dbReference type="SUPFAM" id="SSF52540">
    <property type="entry name" value="P-loop containing nucleoside triphosphate hydrolases"/>
    <property type="match status" value="1"/>
</dbReference>
<protein>
    <recommendedName>
        <fullName evidence="1">Ribose 1,5-bisphosphate phosphokinase PhnN</fullName>
        <ecNumber evidence="1">2.7.4.23</ecNumber>
    </recommendedName>
    <alternativeName>
        <fullName evidence="1">Ribose 1,5-bisphosphokinase</fullName>
    </alternativeName>
</protein>
<organism>
    <name type="scientific">Azotobacter vinelandii (strain DJ / ATCC BAA-1303)</name>
    <dbReference type="NCBI Taxonomy" id="322710"/>
    <lineage>
        <taxon>Bacteria</taxon>
        <taxon>Pseudomonadati</taxon>
        <taxon>Pseudomonadota</taxon>
        <taxon>Gammaproteobacteria</taxon>
        <taxon>Pseudomonadales</taxon>
        <taxon>Pseudomonadaceae</taxon>
        <taxon>Azotobacter</taxon>
    </lineage>
</organism>
<keyword id="KW-0067">ATP-binding</keyword>
<keyword id="KW-0547">Nucleotide-binding</keyword>
<keyword id="KW-0808">Transferase</keyword>
<accession>C1DLT0</accession>
<sequence length="183" mass="20116">MGGRLIYLMGASGSGKDSLLEAVRERVLAAGGRIVRRVVTRSPEAVGEDALGVSPERFEQLLAEGAFALHWRANGLAYGIPRQIDDWLVDGRDVLINGSRGHLAAARRRYPELCAVLLTVEPQVLRQRLLARGRETIEEIEARLARNARLPLDGEDCQRLDNSASLAQTAEALLRLIRKRACA</sequence>
<comment type="function">
    <text evidence="1">Catalyzes the phosphorylation of ribose 1,5-bisphosphate to 5-phospho-D-ribosyl alpha-1-diphosphate (PRPP).</text>
</comment>
<comment type="catalytic activity">
    <reaction evidence="1">
        <text>alpha-D-ribose 1,5-bisphosphate + ATP = 5-phospho-alpha-D-ribose 1-diphosphate + ADP</text>
        <dbReference type="Rhea" id="RHEA:20109"/>
        <dbReference type="ChEBI" id="CHEBI:30616"/>
        <dbReference type="ChEBI" id="CHEBI:58017"/>
        <dbReference type="ChEBI" id="CHEBI:68688"/>
        <dbReference type="ChEBI" id="CHEBI:456216"/>
        <dbReference type="EC" id="2.7.4.23"/>
    </reaction>
</comment>
<comment type="pathway">
    <text evidence="1">Metabolic intermediate biosynthesis; 5-phospho-alpha-D-ribose 1-diphosphate biosynthesis; 5-phospho-alpha-D-ribose 1-diphosphate from D-ribose 5-phosphate (route II): step 3/3.</text>
</comment>
<comment type="similarity">
    <text evidence="1">Belongs to the ribose 1,5-bisphosphokinase family.</text>
</comment>
<reference key="1">
    <citation type="journal article" date="2009" name="J. Bacteriol.">
        <title>Genome sequence of Azotobacter vinelandii, an obligate aerobe specialized to support diverse anaerobic metabolic processes.</title>
        <authorList>
            <person name="Setubal J.C."/>
            <person name="Dos Santos P."/>
            <person name="Goldman B.S."/>
            <person name="Ertesvaag H."/>
            <person name="Espin G."/>
            <person name="Rubio L.M."/>
            <person name="Valla S."/>
            <person name="Almeida N.F."/>
            <person name="Balasubramanian D."/>
            <person name="Cromes L."/>
            <person name="Curatti L."/>
            <person name="Du Z."/>
            <person name="Godsy E."/>
            <person name="Goodner B."/>
            <person name="Hellner-Burris K."/>
            <person name="Hernandez J.A."/>
            <person name="Houmiel K."/>
            <person name="Imperial J."/>
            <person name="Kennedy C."/>
            <person name="Larson T.J."/>
            <person name="Latreille P."/>
            <person name="Ligon L.S."/>
            <person name="Lu J."/>
            <person name="Maerk M."/>
            <person name="Miller N.M."/>
            <person name="Norton S."/>
            <person name="O'Carroll I.P."/>
            <person name="Paulsen I."/>
            <person name="Raulfs E.C."/>
            <person name="Roemer R."/>
            <person name="Rosser J."/>
            <person name="Segura D."/>
            <person name="Slater S."/>
            <person name="Stricklin S.L."/>
            <person name="Studholme D.J."/>
            <person name="Sun J."/>
            <person name="Viana C.J."/>
            <person name="Wallin E."/>
            <person name="Wang B."/>
            <person name="Wheeler C."/>
            <person name="Zhu H."/>
            <person name="Dean D.R."/>
            <person name="Dixon R."/>
            <person name="Wood D."/>
        </authorList>
    </citation>
    <scope>NUCLEOTIDE SEQUENCE [LARGE SCALE GENOMIC DNA]</scope>
    <source>
        <strain>DJ / ATCC BAA-1303</strain>
    </source>
</reference>
<gene>
    <name evidence="1" type="primary">phnN</name>
    <name type="ordered locus">Avin_07830</name>
</gene>
<name>PHNN_AZOVD</name>